<dbReference type="EC" id="1.8.4.11" evidence="1"/>
<dbReference type="EMBL" id="BX571856">
    <property type="protein sequence ID" value="CAG40434.1"/>
    <property type="molecule type" value="Genomic_DNA"/>
</dbReference>
<dbReference type="SMR" id="Q6GGY3"/>
<dbReference type="KEGG" id="sar:SAR1437"/>
<dbReference type="HOGENOM" id="CLU_031040_10_1_9"/>
<dbReference type="Proteomes" id="UP000000596">
    <property type="component" value="Chromosome"/>
</dbReference>
<dbReference type="GO" id="GO:0033744">
    <property type="term" value="F:L-methionine:thioredoxin-disulfide S-oxidoreductase activity"/>
    <property type="evidence" value="ECO:0007669"/>
    <property type="project" value="RHEA"/>
</dbReference>
<dbReference type="GO" id="GO:0008113">
    <property type="term" value="F:peptide-methionine (S)-S-oxide reductase activity"/>
    <property type="evidence" value="ECO:0007669"/>
    <property type="project" value="UniProtKB-UniRule"/>
</dbReference>
<dbReference type="GO" id="GO:0036211">
    <property type="term" value="P:protein modification process"/>
    <property type="evidence" value="ECO:0007669"/>
    <property type="project" value="UniProtKB-UniRule"/>
</dbReference>
<dbReference type="FunFam" id="3.30.1060.10:FF:000003">
    <property type="entry name" value="Peptide methionine sulfoxide reductase MsrA"/>
    <property type="match status" value="1"/>
</dbReference>
<dbReference type="Gene3D" id="3.30.1060.10">
    <property type="entry name" value="Peptide methionine sulphoxide reductase MsrA"/>
    <property type="match status" value="1"/>
</dbReference>
<dbReference type="HAMAP" id="MF_01401">
    <property type="entry name" value="MsrA"/>
    <property type="match status" value="1"/>
</dbReference>
<dbReference type="InterPro" id="IPR002569">
    <property type="entry name" value="Met_Sox_Rdtase_MsrA_dom"/>
</dbReference>
<dbReference type="InterPro" id="IPR036509">
    <property type="entry name" value="Met_Sox_Rdtase_MsrA_sf"/>
</dbReference>
<dbReference type="NCBIfam" id="TIGR00401">
    <property type="entry name" value="msrA"/>
    <property type="match status" value="1"/>
</dbReference>
<dbReference type="PANTHER" id="PTHR43774">
    <property type="entry name" value="PEPTIDE METHIONINE SULFOXIDE REDUCTASE"/>
    <property type="match status" value="1"/>
</dbReference>
<dbReference type="PANTHER" id="PTHR43774:SF1">
    <property type="entry name" value="PEPTIDE METHIONINE SULFOXIDE REDUCTASE MSRA 2"/>
    <property type="match status" value="1"/>
</dbReference>
<dbReference type="Pfam" id="PF01625">
    <property type="entry name" value="PMSR"/>
    <property type="match status" value="1"/>
</dbReference>
<dbReference type="SUPFAM" id="SSF55068">
    <property type="entry name" value="Peptide methionine sulfoxide reductase"/>
    <property type="match status" value="1"/>
</dbReference>
<keyword id="KW-0560">Oxidoreductase</keyword>
<comment type="function">
    <text evidence="1">Has an important function as a repair enzyme for proteins that have been inactivated by oxidation. Catalyzes the reversible oxidation-reduction of methionine sulfoxide in proteins to methionine.</text>
</comment>
<comment type="catalytic activity">
    <reaction evidence="1">
        <text>L-methionyl-[protein] + [thioredoxin]-disulfide + H2O = L-methionyl-(S)-S-oxide-[protein] + [thioredoxin]-dithiol</text>
        <dbReference type="Rhea" id="RHEA:14217"/>
        <dbReference type="Rhea" id="RHEA-COMP:10698"/>
        <dbReference type="Rhea" id="RHEA-COMP:10700"/>
        <dbReference type="Rhea" id="RHEA-COMP:12313"/>
        <dbReference type="Rhea" id="RHEA-COMP:12315"/>
        <dbReference type="ChEBI" id="CHEBI:15377"/>
        <dbReference type="ChEBI" id="CHEBI:16044"/>
        <dbReference type="ChEBI" id="CHEBI:29950"/>
        <dbReference type="ChEBI" id="CHEBI:44120"/>
        <dbReference type="ChEBI" id="CHEBI:50058"/>
        <dbReference type="EC" id="1.8.4.11"/>
    </reaction>
</comment>
<comment type="catalytic activity">
    <reaction evidence="1">
        <text>[thioredoxin]-disulfide + L-methionine + H2O = L-methionine (S)-S-oxide + [thioredoxin]-dithiol</text>
        <dbReference type="Rhea" id="RHEA:19993"/>
        <dbReference type="Rhea" id="RHEA-COMP:10698"/>
        <dbReference type="Rhea" id="RHEA-COMP:10700"/>
        <dbReference type="ChEBI" id="CHEBI:15377"/>
        <dbReference type="ChEBI" id="CHEBI:29950"/>
        <dbReference type="ChEBI" id="CHEBI:50058"/>
        <dbReference type="ChEBI" id="CHEBI:57844"/>
        <dbReference type="ChEBI" id="CHEBI:58772"/>
        <dbReference type="EC" id="1.8.4.11"/>
    </reaction>
</comment>
<comment type="similarity">
    <text evidence="1">Belongs to the MsrA Met sulfoxide reductase family.</text>
</comment>
<accession>Q6GGY3</accession>
<feature type="chain" id="PRO_0000138586" description="Peptide methionine sulfoxide reductase MsrA 2">
    <location>
        <begin position="1"/>
        <end position="177"/>
    </location>
</feature>
<feature type="active site" evidence="1">
    <location>
        <position position="12"/>
    </location>
</feature>
<proteinExistence type="inferred from homology"/>
<evidence type="ECO:0000255" key="1">
    <source>
        <dbReference type="HAMAP-Rule" id="MF_01401"/>
    </source>
</evidence>
<sequence length="177" mass="20559">MTKEYATLAGGCFWCMVKPFTSYPGIKSVVSGYSGGHADNPTYEQVCTNQTGHVEAVQITFDPEVTSFENILDIYFKTFDPTDDQGQFFDRGESYQPVIFYHDKHQKKAAEFKKQQLNEQGIFKKPVITPIKPYKNFYPAEDYHQDYYKKNPVHYYQYQRGSGRKAFIESHWGNQNA</sequence>
<reference key="1">
    <citation type="journal article" date="2004" name="Proc. Natl. Acad. Sci. U.S.A.">
        <title>Complete genomes of two clinical Staphylococcus aureus strains: evidence for the rapid evolution of virulence and drug resistance.</title>
        <authorList>
            <person name="Holden M.T.G."/>
            <person name="Feil E.J."/>
            <person name="Lindsay J.A."/>
            <person name="Peacock S.J."/>
            <person name="Day N.P.J."/>
            <person name="Enright M.C."/>
            <person name="Foster T.J."/>
            <person name="Moore C.E."/>
            <person name="Hurst L."/>
            <person name="Atkin R."/>
            <person name="Barron A."/>
            <person name="Bason N."/>
            <person name="Bentley S.D."/>
            <person name="Chillingworth C."/>
            <person name="Chillingworth T."/>
            <person name="Churcher C."/>
            <person name="Clark L."/>
            <person name="Corton C."/>
            <person name="Cronin A."/>
            <person name="Doggett J."/>
            <person name="Dowd L."/>
            <person name="Feltwell T."/>
            <person name="Hance Z."/>
            <person name="Harris B."/>
            <person name="Hauser H."/>
            <person name="Holroyd S."/>
            <person name="Jagels K."/>
            <person name="James K.D."/>
            <person name="Lennard N."/>
            <person name="Line A."/>
            <person name="Mayes R."/>
            <person name="Moule S."/>
            <person name="Mungall K."/>
            <person name="Ormond D."/>
            <person name="Quail M.A."/>
            <person name="Rabbinowitsch E."/>
            <person name="Rutherford K.M."/>
            <person name="Sanders M."/>
            <person name="Sharp S."/>
            <person name="Simmonds M."/>
            <person name="Stevens K."/>
            <person name="Whitehead S."/>
            <person name="Barrell B.G."/>
            <person name="Spratt B.G."/>
            <person name="Parkhill J."/>
        </authorList>
    </citation>
    <scope>NUCLEOTIDE SEQUENCE [LARGE SCALE GENOMIC DNA]</scope>
    <source>
        <strain>MRSA252</strain>
    </source>
</reference>
<organism>
    <name type="scientific">Staphylococcus aureus (strain MRSA252)</name>
    <dbReference type="NCBI Taxonomy" id="282458"/>
    <lineage>
        <taxon>Bacteria</taxon>
        <taxon>Bacillati</taxon>
        <taxon>Bacillota</taxon>
        <taxon>Bacilli</taxon>
        <taxon>Bacillales</taxon>
        <taxon>Staphylococcaceae</taxon>
        <taxon>Staphylococcus</taxon>
    </lineage>
</organism>
<protein>
    <recommendedName>
        <fullName evidence="1">Peptide methionine sulfoxide reductase MsrA 2</fullName>
        <shortName evidence="1">Protein-methionine-S-oxide reductase 2</shortName>
        <ecNumber evidence="1">1.8.4.11</ecNumber>
    </recommendedName>
    <alternativeName>
        <fullName evidence="1">Peptide-methionine (S)-S-oxide reductase 2</fullName>
        <shortName evidence="1">Peptide Met(O) reductase 2</shortName>
    </alternativeName>
</protein>
<gene>
    <name evidence="1" type="primary">msrA2</name>
    <name type="ordered locus">SAR1437</name>
</gene>
<name>MSRA2_STAAR</name>